<accession>B4IG10</accession>
<proteinExistence type="inferred from homology"/>
<evidence type="ECO:0000256" key="1">
    <source>
        <dbReference type="SAM" id="MobiDB-lite"/>
    </source>
</evidence>
<evidence type="ECO:0000305" key="2"/>
<keyword id="KW-1185">Reference proteome</keyword>
<feature type="chain" id="PRO_0000385326" description="SOSS complex subunit C homolog">
    <location>
        <begin position="1"/>
        <end position="126"/>
    </location>
</feature>
<feature type="region of interest" description="Disordered" evidence="1">
    <location>
        <begin position="106"/>
        <end position="126"/>
    </location>
</feature>
<feature type="compositionally biased region" description="Pro residues" evidence="1">
    <location>
        <begin position="107"/>
        <end position="119"/>
    </location>
</feature>
<comment type="similarity">
    <text evidence="2">Belongs to the SOSS-C family.</text>
</comment>
<name>SOSSC_DROSE</name>
<gene>
    <name type="ORF">GM15016</name>
</gene>
<sequence>MAFPTTSAQQAETNRKILEEIQTKKQLLAGGIINLGLSPPNQMPAPQLLGQPTTVNPDFQAGVGIATNATSTTRSAFNPTSSTTLGFFIPQDSYFGNSFIPVLPRLEPLPSPATTPTAPPSHSISK</sequence>
<protein>
    <recommendedName>
        <fullName>SOSS complex subunit C homolog</fullName>
    </recommendedName>
</protein>
<organism>
    <name type="scientific">Drosophila sechellia</name>
    <name type="common">Fruit fly</name>
    <dbReference type="NCBI Taxonomy" id="7238"/>
    <lineage>
        <taxon>Eukaryota</taxon>
        <taxon>Metazoa</taxon>
        <taxon>Ecdysozoa</taxon>
        <taxon>Arthropoda</taxon>
        <taxon>Hexapoda</taxon>
        <taxon>Insecta</taxon>
        <taxon>Pterygota</taxon>
        <taxon>Neoptera</taxon>
        <taxon>Endopterygota</taxon>
        <taxon>Diptera</taxon>
        <taxon>Brachycera</taxon>
        <taxon>Muscomorpha</taxon>
        <taxon>Ephydroidea</taxon>
        <taxon>Drosophilidae</taxon>
        <taxon>Drosophila</taxon>
        <taxon>Sophophora</taxon>
    </lineage>
</organism>
<reference key="1">
    <citation type="journal article" date="2007" name="Nature">
        <title>Evolution of genes and genomes on the Drosophila phylogeny.</title>
        <authorList>
            <consortium name="Drosophila 12 genomes consortium"/>
        </authorList>
    </citation>
    <scope>NUCLEOTIDE SEQUENCE [LARGE SCALE GENOMIC DNA]</scope>
    <source>
        <strain>Rob3c / Tucson 14021-0248.25</strain>
    </source>
</reference>
<dbReference type="EMBL" id="CH480834">
    <property type="protein sequence ID" value="EDW46597.1"/>
    <property type="molecule type" value="Genomic_DNA"/>
</dbReference>
<dbReference type="SMR" id="B4IG10"/>
<dbReference type="STRING" id="7238.B4IG10"/>
<dbReference type="EnsemblMetazoa" id="FBtr0198001">
    <property type="protein sequence ID" value="FBpp0196493"/>
    <property type="gene ID" value="FBgn0169936"/>
</dbReference>
<dbReference type="EnsemblMetazoa" id="XM_002042634.2">
    <property type="protein sequence ID" value="XP_002042670.1"/>
    <property type="gene ID" value="LOC6618400"/>
</dbReference>
<dbReference type="GeneID" id="6618400"/>
<dbReference type="KEGG" id="dse:6618400"/>
<dbReference type="HOGENOM" id="CLU_145773_0_0_1"/>
<dbReference type="OMA" id="VMETQHM"/>
<dbReference type="OrthoDB" id="32797at7215"/>
<dbReference type="PhylomeDB" id="B4IG10"/>
<dbReference type="Proteomes" id="UP000001292">
    <property type="component" value="Unassembled WGS sequence"/>
</dbReference>
<dbReference type="GO" id="GO:0005654">
    <property type="term" value="C:nucleoplasm"/>
    <property type="evidence" value="ECO:0007669"/>
    <property type="project" value="TreeGrafter"/>
</dbReference>
<dbReference type="GO" id="GO:0070876">
    <property type="term" value="C:SOSS complex"/>
    <property type="evidence" value="ECO:0007669"/>
    <property type="project" value="InterPro"/>
</dbReference>
<dbReference type="GO" id="GO:0006281">
    <property type="term" value="P:DNA repair"/>
    <property type="evidence" value="ECO:0007669"/>
    <property type="project" value="InterPro"/>
</dbReference>
<dbReference type="InterPro" id="IPR031821">
    <property type="entry name" value="SOSSC"/>
</dbReference>
<dbReference type="PANTHER" id="PTHR31526">
    <property type="entry name" value="SOSS COMPLEX SUBUNIT C"/>
    <property type="match status" value="1"/>
</dbReference>
<dbReference type="PANTHER" id="PTHR31526:SF2">
    <property type="entry name" value="SOSS COMPLEX SUBUNIT C"/>
    <property type="match status" value="1"/>
</dbReference>
<dbReference type="Pfam" id="PF15925">
    <property type="entry name" value="SOSSC"/>
    <property type="match status" value="1"/>
</dbReference>